<accession>Q5R8Y6</accession>
<sequence>MSARLPVLSPPRWPRLLLLSLLLLGAVPGPRRSGGFYLPGLAPVNFCDEEKKSDECKAEIELFVNRLDSVESVLPYEYTAFDFCQASEGKRPSENLGQVLFGERIEPSPYKFTFNKEETCKLVCTKTYHTEKAEDKQKLEFLKKSMLLNYQHHWIVDNMPVTWCYDVEDGQRFCNPGFPIGCYITDKGHAKDACVINSEFHERDTFYIFNHVDIKIYYHVVETGSMGARLVAAKLEPKSFKHTHIDKPDCSGPPMDISNKASGEIKIAYTYSVSFEEDKKIRWASRWDYILESMPHTHIQWFSIMNSLVIVLFLSGMVAMIMLRTLHKDIARYNQMDSTEDAQEEFGWKLVHGDIFRPPRKGMLLSVFLGSGTQILIMTFVTLFFACLGFLSPANRGALMTCAVVLWVLLGTPAGYVAARFYKSFGGEKWKTNVLLTSFLCPGIVFADFFIMNLILWGEGSSAAIPFGTLVAILALWFCISVPLTFIGAYFGFKKNAIEHPVRTNQIPRQIPEQSFYTKPLPGIIMGGILPFGCIFIQLFFILNSIWSHQMYYMFGFLFLVFIILVITCSEATILLCYFHLCAEDYHWQWRSFLTSGFTAVYFLIYAVHYFFSKLQITGTASTILYFGYTMIMVLIFFLFTGTIGFFACFWFVTKIYSVVKVD</sequence>
<dbReference type="EMBL" id="CR859611">
    <property type="protein sequence ID" value="CAH91774.1"/>
    <property type="molecule type" value="mRNA"/>
</dbReference>
<dbReference type="RefSeq" id="NP_001126027.1">
    <property type="nucleotide sequence ID" value="NM_001132555.1"/>
</dbReference>
<dbReference type="RefSeq" id="XP_054384657.1">
    <property type="nucleotide sequence ID" value="XM_054528682.2"/>
</dbReference>
<dbReference type="RefSeq" id="XP_054384658.1">
    <property type="nucleotide sequence ID" value="XM_054528683.2"/>
</dbReference>
<dbReference type="SMR" id="Q5R8Y6"/>
<dbReference type="FunCoup" id="Q5R8Y6">
    <property type="interactions" value="1526"/>
</dbReference>
<dbReference type="STRING" id="9601.ENSPPYP00000006235"/>
<dbReference type="Ensembl" id="ENSPPYT00000006481.3">
    <property type="protein sequence ID" value="ENSPPYP00000006235.2"/>
    <property type="gene ID" value="ENSPPYG00000005468.3"/>
</dbReference>
<dbReference type="GeneID" id="100172975"/>
<dbReference type="KEGG" id="pon:100172975"/>
<dbReference type="CTD" id="9375"/>
<dbReference type="eggNOG" id="KOG1278">
    <property type="taxonomic scope" value="Eukaryota"/>
</dbReference>
<dbReference type="GeneTree" id="ENSGT00940000157563"/>
<dbReference type="HOGENOM" id="CLU_010714_4_1_1"/>
<dbReference type="InParanoid" id="Q5R8Y6"/>
<dbReference type="OMA" id="KVYYMFG"/>
<dbReference type="OrthoDB" id="1666796at2759"/>
<dbReference type="TreeFam" id="TF300394"/>
<dbReference type="Proteomes" id="UP000001595">
    <property type="component" value="Chromosome 13"/>
</dbReference>
<dbReference type="GO" id="GO:0010008">
    <property type="term" value="C:endosome membrane"/>
    <property type="evidence" value="ECO:0007669"/>
    <property type="project" value="UniProtKB-SubCell"/>
</dbReference>
<dbReference type="GO" id="GO:0005794">
    <property type="term" value="C:Golgi apparatus"/>
    <property type="evidence" value="ECO:0000250"/>
    <property type="project" value="UniProtKB"/>
</dbReference>
<dbReference type="GO" id="GO:0005815">
    <property type="term" value="C:microtubule organizing center"/>
    <property type="evidence" value="ECO:0007669"/>
    <property type="project" value="UniProtKB-SubCell"/>
</dbReference>
<dbReference type="GO" id="GO:0006672">
    <property type="term" value="P:ceramide metabolic process"/>
    <property type="evidence" value="ECO:0007669"/>
    <property type="project" value="Ensembl"/>
</dbReference>
<dbReference type="GO" id="GO:0006688">
    <property type="term" value="P:glycosphingolipid biosynthetic process"/>
    <property type="evidence" value="ECO:0007669"/>
    <property type="project" value="Ensembl"/>
</dbReference>
<dbReference type="GO" id="GO:0072657">
    <property type="term" value="P:protein localization to membrane"/>
    <property type="evidence" value="ECO:0007669"/>
    <property type="project" value="TreeGrafter"/>
</dbReference>
<dbReference type="GO" id="GO:0010908">
    <property type="term" value="P:regulation of heparan sulfate proteoglycan biosynthetic process"/>
    <property type="evidence" value="ECO:0007669"/>
    <property type="project" value="Ensembl"/>
</dbReference>
<dbReference type="InterPro" id="IPR004240">
    <property type="entry name" value="EMP70"/>
</dbReference>
<dbReference type="PANTHER" id="PTHR10766:SF111">
    <property type="entry name" value="TRANSMEMBRANE 9 SUPERFAMILY MEMBER 2"/>
    <property type="match status" value="1"/>
</dbReference>
<dbReference type="PANTHER" id="PTHR10766">
    <property type="entry name" value="TRANSMEMBRANE 9 SUPERFAMILY PROTEIN"/>
    <property type="match status" value="1"/>
</dbReference>
<dbReference type="Pfam" id="PF02990">
    <property type="entry name" value="EMP70"/>
    <property type="match status" value="1"/>
</dbReference>
<comment type="function">
    <text evidence="2">In the intracellular compartments, may function as a channel or small molecule transporter.</text>
</comment>
<comment type="subcellular location">
    <subcellularLocation>
        <location evidence="2">Endosome membrane</location>
        <topology evidence="3">Multi-pass membrane protein</topology>
    </subcellularLocation>
    <subcellularLocation>
        <location evidence="1">Golgi outpost</location>
    </subcellularLocation>
    <subcellularLocation>
        <location evidence="1">Cytoplasm</location>
        <location evidence="1">Cytoskeleton</location>
        <location evidence="1">Microtubule organizing center</location>
    </subcellularLocation>
    <text evidence="1">Localizes to the postsynaptic Golgi apparatus region, also named Golgi outpost, which shapes dendrite morphology by functioning as sites of acentrosomal microtubule nucleation.</text>
</comment>
<comment type="similarity">
    <text evidence="4">Belongs to the nonaspanin (TM9SF) (TC 9.A.2) family.</text>
</comment>
<reference key="1">
    <citation type="submission" date="2004-11" db="EMBL/GenBank/DDBJ databases">
        <authorList>
            <consortium name="The German cDNA consortium"/>
        </authorList>
    </citation>
    <scope>NUCLEOTIDE SEQUENCE [LARGE SCALE MRNA]</scope>
    <source>
        <tissue>Heart</tissue>
    </source>
</reference>
<protein>
    <recommendedName>
        <fullName>Transmembrane 9 superfamily member 2</fullName>
    </recommendedName>
</protein>
<keyword id="KW-0963">Cytoplasm</keyword>
<keyword id="KW-0206">Cytoskeleton</keyword>
<keyword id="KW-0967">Endosome</keyword>
<keyword id="KW-0333">Golgi apparatus</keyword>
<keyword id="KW-0472">Membrane</keyword>
<keyword id="KW-1185">Reference proteome</keyword>
<keyword id="KW-0732">Signal</keyword>
<keyword id="KW-0812">Transmembrane</keyword>
<keyword id="KW-1133">Transmembrane helix</keyword>
<gene>
    <name type="primary">TM9SF2</name>
</gene>
<proteinExistence type="evidence at transcript level"/>
<evidence type="ECO:0000250" key="1">
    <source>
        <dbReference type="UniProtKB" id="Q66HG5"/>
    </source>
</evidence>
<evidence type="ECO:0000250" key="2">
    <source>
        <dbReference type="UniProtKB" id="Q99805"/>
    </source>
</evidence>
<evidence type="ECO:0000255" key="3"/>
<evidence type="ECO:0000305" key="4"/>
<feature type="signal peptide" evidence="3">
    <location>
        <begin position="1"/>
        <end position="28"/>
    </location>
</feature>
<feature type="chain" id="PRO_0000034367" description="Transmembrane 9 superfamily member 2">
    <location>
        <begin position="29"/>
        <end position="663"/>
    </location>
</feature>
<feature type="topological domain" description="Lumenal" evidence="3">
    <location>
        <begin position="29"/>
        <end position="300"/>
    </location>
</feature>
<feature type="transmembrane region" description="Helical" evidence="3">
    <location>
        <begin position="301"/>
        <end position="321"/>
    </location>
</feature>
<feature type="topological domain" description="Cytoplasmic" evidence="3">
    <location>
        <begin position="322"/>
        <end position="374"/>
    </location>
</feature>
<feature type="transmembrane region" description="Helical" evidence="3">
    <location>
        <begin position="375"/>
        <end position="395"/>
    </location>
</feature>
<feature type="topological domain" description="Lumenal" evidence="3">
    <location>
        <begin position="396"/>
        <end position="398"/>
    </location>
</feature>
<feature type="transmembrane region" description="Helical" evidence="3">
    <location>
        <begin position="399"/>
        <end position="419"/>
    </location>
</feature>
<feature type="topological domain" description="Cytoplasmic" evidence="3">
    <location>
        <begin position="420"/>
        <end position="437"/>
    </location>
</feature>
<feature type="transmembrane region" description="Helical" evidence="3">
    <location>
        <begin position="438"/>
        <end position="458"/>
    </location>
</feature>
<feature type="topological domain" description="Lumenal" evidence="3">
    <location>
        <begin position="459"/>
        <end position="466"/>
    </location>
</feature>
<feature type="transmembrane region" description="Helical" evidence="3">
    <location>
        <begin position="467"/>
        <end position="487"/>
    </location>
</feature>
<feature type="topological domain" description="Cytoplasmic" evidence="3">
    <location>
        <begin position="488"/>
        <end position="522"/>
    </location>
</feature>
<feature type="transmembrane region" description="Helical" evidence="3">
    <location>
        <begin position="523"/>
        <end position="543"/>
    </location>
</feature>
<feature type="topological domain" description="Lumenal" evidence="3">
    <location>
        <begin position="544"/>
        <end position="554"/>
    </location>
</feature>
<feature type="transmembrane region" description="Helical" evidence="3">
    <location>
        <begin position="555"/>
        <end position="575"/>
    </location>
</feature>
<feature type="topological domain" description="Cytoplasmic" evidence="3">
    <location>
        <begin position="576"/>
        <end position="591"/>
    </location>
</feature>
<feature type="transmembrane region" description="Helical" evidence="3">
    <location>
        <begin position="592"/>
        <end position="612"/>
    </location>
</feature>
<feature type="topological domain" description="Lumenal" evidence="3">
    <location>
        <begin position="613"/>
        <end position="631"/>
    </location>
</feature>
<feature type="transmembrane region" description="Helical" evidence="3">
    <location>
        <begin position="632"/>
        <end position="652"/>
    </location>
</feature>
<feature type="topological domain" description="Cytoplasmic" evidence="3">
    <location>
        <begin position="653"/>
        <end position="663"/>
    </location>
</feature>
<name>TM9S2_PONAB</name>
<organism>
    <name type="scientific">Pongo abelii</name>
    <name type="common">Sumatran orangutan</name>
    <name type="synonym">Pongo pygmaeus abelii</name>
    <dbReference type="NCBI Taxonomy" id="9601"/>
    <lineage>
        <taxon>Eukaryota</taxon>
        <taxon>Metazoa</taxon>
        <taxon>Chordata</taxon>
        <taxon>Craniata</taxon>
        <taxon>Vertebrata</taxon>
        <taxon>Euteleostomi</taxon>
        <taxon>Mammalia</taxon>
        <taxon>Eutheria</taxon>
        <taxon>Euarchontoglires</taxon>
        <taxon>Primates</taxon>
        <taxon>Haplorrhini</taxon>
        <taxon>Catarrhini</taxon>
        <taxon>Hominidae</taxon>
        <taxon>Pongo</taxon>
    </lineage>
</organism>